<feature type="chain" id="PRO_0000314062" description="Unknown placental glycoprotein 45J1">
    <location>
        <begin position="1"/>
        <end position="17" status="greater than"/>
    </location>
</feature>
<feature type="non-terminal residue" evidence="2">
    <location>
        <position position="17"/>
    </location>
</feature>
<proteinExistence type="evidence at protein level"/>
<evidence type="ECO:0000269" key="1">
    <source>
    </source>
</evidence>
<evidence type="ECO:0000303" key="2">
    <source>
    </source>
</evidence>
<reference key="1">
    <citation type="journal article" date="2009" name="Anim. Reprod. Sci.">
        <title>Identification of multiple pregnancy-associated glycoproteins (PAGs) purified from the European bison (Eb; Bison bonasus L.) placentas.</title>
        <authorList>
            <person name="Kiewisz J."/>
            <person name="Melo de Sousa N."/>
            <person name="Beckers J.-F.M.P."/>
            <person name="Panasiewicz G."/>
            <person name="Gizejewski Z."/>
            <person name="Szafranska B."/>
        </authorList>
    </citation>
    <scope>PROTEIN SEQUENCE</scope>
    <scope>TISSUE SPECIFICITY</scope>
    <scope>DEVELOPMENTAL STAGE</scope>
    <scope>GLYCOSYLATION</scope>
    <source>
        <tissue>Placenta</tissue>
    </source>
</reference>
<organism>
    <name type="scientific">Bison bonasus</name>
    <name type="common">European bison</name>
    <dbReference type="NCBI Taxonomy" id="9902"/>
    <lineage>
        <taxon>Eukaryota</taxon>
        <taxon>Metazoa</taxon>
        <taxon>Chordata</taxon>
        <taxon>Craniata</taxon>
        <taxon>Vertebrata</taxon>
        <taxon>Euteleostomi</taxon>
        <taxon>Mammalia</taxon>
        <taxon>Eutheria</taxon>
        <taxon>Laurasiatheria</taxon>
        <taxon>Artiodactyla</taxon>
        <taxon>Ruminantia</taxon>
        <taxon>Pecora</taxon>
        <taxon>Bovidae</taxon>
        <taxon>Bovinae</taxon>
        <taxon>Bison</taxon>
    </lineage>
</organism>
<sequence length="17" mass="1983">SKDNYKNYIPLIVPFAT</sequence>
<name>PG4J1_BISBO</name>
<comment type="tissue specificity">
    <text evidence="1">Chorionic epithelium (trophectoderm) and placental cotyledons.</text>
</comment>
<comment type="developmental stage">
    <text evidence="1">Expressed at 120 dpc.</text>
</comment>
<comment type="PTM">
    <text evidence="1">Glycosylated.</text>
</comment>
<comment type="miscellaneous">
    <text evidence="1">On the 2D-gel the determined pI of this protein is: 6.9, its MW is: 45 kDa.</text>
</comment>
<keyword id="KW-0903">Direct protein sequencing</keyword>
<keyword id="KW-0325">Glycoprotein</keyword>
<protein>
    <recommendedName>
        <fullName>Unknown placental glycoprotein 45J1</fullName>
    </recommendedName>
</protein>
<accession>P85328</accession>